<feature type="signal peptide" evidence="2">
    <location>
        <begin position="1"/>
        <end position="23"/>
    </location>
</feature>
<feature type="chain" id="PRO_5011104440" description="Beta-lactamase CMY-10" evidence="2">
    <location>
        <begin position="24"/>
        <end position="382"/>
    </location>
</feature>
<feature type="active site" description="Acyl-ester intermediate" evidence="3">
    <location>
        <position position="88"/>
    </location>
</feature>
<feature type="binding site" description="covalent" evidence="8 18">
    <location>
        <position position="88"/>
    </location>
    <ligand>
        <name>AMP</name>
        <dbReference type="ChEBI" id="CHEBI:456215"/>
    </ligand>
</feature>
<feature type="binding site" evidence="9 20">
    <location>
        <position position="88"/>
    </location>
    <ligand>
        <name>GMP</name>
        <dbReference type="ChEBI" id="CHEBI:58115"/>
    </ligand>
</feature>
<feature type="binding site" evidence="9 21">
    <location>
        <position position="88"/>
    </location>
    <ligand>
        <name>IMP</name>
        <dbReference type="ChEBI" id="CHEBI:58053"/>
    </ligand>
</feature>
<feature type="binding site" evidence="9 20">
    <location>
        <position position="144"/>
    </location>
    <ligand>
        <name>GMP</name>
        <dbReference type="ChEBI" id="CHEBI:58115"/>
    </ligand>
</feature>
<feature type="binding site" evidence="9 21">
    <location>
        <position position="144"/>
    </location>
    <ligand>
        <name>IMP</name>
        <dbReference type="ChEBI" id="CHEBI:58053"/>
    </ligand>
</feature>
<feature type="binding site" evidence="8 18">
    <location>
        <position position="174"/>
    </location>
    <ligand>
        <name>AMP</name>
        <dbReference type="ChEBI" id="CHEBI:456215"/>
    </ligand>
</feature>
<feature type="binding site" evidence="9 20">
    <location>
        <position position="174"/>
    </location>
    <ligand>
        <name>GMP</name>
        <dbReference type="ChEBI" id="CHEBI:58115"/>
    </ligand>
</feature>
<feature type="binding site" evidence="9 21">
    <location>
        <position position="174"/>
    </location>
    <ligand>
        <name>IMP</name>
        <dbReference type="ChEBI" id="CHEBI:58053"/>
    </ligand>
</feature>
<feature type="binding site" evidence="9 20">
    <location>
        <position position="336"/>
    </location>
    <ligand>
        <name>GMP</name>
        <dbReference type="ChEBI" id="CHEBI:58115"/>
    </ligand>
</feature>
<feature type="binding site" evidence="9 21">
    <location>
        <position position="336"/>
    </location>
    <ligand>
        <name>IMP</name>
        <dbReference type="ChEBI" id="CHEBI:58053"/>
    </ligand>
</feature>
<feature type="binding site" evidence="8 18">
    <location>
        <position position="338"/>
    </location>
    <ligand>
        <name>AMP</name>
        <dbReference type="ChEBI" id="CHEBI:456215"/>
    </ligand>
</feature>
<feature type="binding site" evidence="9 20">
    <location>
        <position position="338"/>
    </location>
    <ligand>
        <name>GMP</name>
        <dbReference type="ChEBI" id="CHEBI:58115"/>
    </ligand>
</feature>
<feature type="binding site" evidence="9 21">
    <location>
        <position position="338"/>
    </location>
    <ligand>
        <name>IMP</name>
        <dbReference type="ChEBI" id="CHEBI:58053"/>
    </ligand>
</feature>
<feature type="binding site" evidence="9 20">
    <location>
        <position position="363"/>
    </location>
    <ligand>
        <name>GMP</name>
        <dbReference type="ChEBI" id="CHEBI:58115"/>
    </ligand>
</feature>
<feature type="binding site" evidence="9 21">
    <location>
        <position position="363"/>
    </location>
    <ligand>
        <name>IMP</name>
        <dbReference type="ChEBI" id="CHEBI:58053"/>
    </ligand>
</feature>
<feature type="helix" evidence="22">
    <location>
        <begin position="33"/>
        <end position="46"/>
    </location>
</feature>
<feature type="strand" evidence="22">
    <location>
        <begin position="50"/>
        <end position="58"/>
    </location>
</feature>
<feature type="strand" evidence="22">
    <location>
        <begin position="61"/>
        <end position="71"/>
    </location>
</feature>
<feature type="turn" evidence="22">
    <location>
        <begin position="72"/>
        <end position="75"/>
    </location>
</feature>
<feature type="strand" evidence="22">
    <location>
        <begin position="83"/>
        <end position="85"/>
    </location>
</feature>
<feature type="helix" evidence="22">
    <location>
        <begin position="87"/>
        <end position="89"/>
    </location>
</feature>
<feature type="helix" evidence="22">
    <location>
        <begin position="90"/>
        <end position="103"/>
    </location>
</feature>
<feature type="helix" evidence="22">
    <location>
        <begin position="113"/>
        <end position="116"/>
    </location>
</feature>
<feature type="helix" evidence="22">
    <location>
        <begin position="118"/>
        <end position="120"/>
    </location>
</feature>
<feature type="helix" evidence="22">
    <location>
        <begin position="124"/>
        <end position="127"/>
    </location>
</feature>
<feature type="helix" evidence="22">
    <location>
        <begin position="130"/>
        <end position="134"/>
    </location>
</feature>
<feature type="helix" evidence="22">
    <location>
        <begin position="152"/>
        <end position="161"/>
    </location>
</feature>
<feature type="strand" evidence="22">
    <location>
        <begin position="170"/>
        <end position="172"/>
    </location>
</feature>
<feature type="helix" evidence="22">
    <location>
        <begin position="176"/>
        <end position="189"/>
    </location>
</feature>
<feature type="helix" evidence="22">
    <location>
        <begin position="194"/>
        <end position="200"/>
    </location>
</feature>
<feature type="helix" evidence="22">
    <location>
        <begin position="202"/>
        <end position="205"/>
    </location>
</feature>
<feature type="strand" evidence="22">
    <location>
        <begin position="212"/>
        <end position="214"/>
    </location>
</feature>
<feature type="helix" evidence="22">
    <location>
        <begin position="217"/>
        <end position="222"/>
    </location>
</feature>
<feature type="helix" evidence="22">
    <location>
        <begin position="242"/>
        <end position="246"/>
    </location>
</feature>
<feature type="helix" evidence="22">
    <location>
        <begin position="252"/>
        <end position="264"/>
    </location>
</feature>
<feature type="helix" evidence="22">
    <location>
        <begin position="269"/>
        <end position="279"/>
    </location>
</feature>
<feature type="strand" evidence="22">
    <location>
        <begin position="283"/>
        <end position="285"/>
    </location>
</feature>
<feature type="strand" evidence="22">
    <location>
        <begin position="288"/>
        <end position="290"/>
    </location>
</feature>
<feature type="strand" evidence="22">
    <location>
        <begin position="295"/>
        <end position="300"/>
    </location>
</feature>
<feature type="helix" evidence="22">
    <location>
        <begin position="303"/>
        <end position="309"/>
    </location>
</feature>
<feature type="helix" evidence="22">
    <location>
        <begin position="312"/>
        <end position="316"/>
    </location>
</feature>
<feature type="strand" evidence="22">
    <location>
        <begin position="331"/>
        <end position="339"/>
    </location>
</feature>
<feature type="strand" evidence="22">
    <location>
        <begin position="342"/>
        <end position="349"/>
    </location>
</feature>
<feature type="helix" evidence="22">
    <location>
        <begin position="350"/>
        <end position="352"/>
    </location>
</feature>
<feature type="strand" evidence="22">
    <location>
        <begin position="354"/>
        <end position="362"/>
    </location>
</feature>
<feature type="helix" evidence="22">
    <location>
        <begin position="366"/>
        <end position="381"/>
    </location>
</feature>
<comment type="function">
    <text evidence="5 6 9">Class C beta-lactamase which confers resistance to penicillins and cephalosporins (PubMed:15383166). Has benzylpenicillin-, ceftazidime-, nitrocefin- and imipenem-hydrolyzing activity (PubMed:16677302, PubMed:28242658).</text>
</comment>
<comment type="catalytic activity">
    <reaction evidence="4 6 9">
        <text>a beta-lactam + H2O = a substituted beta-amino acid</text>
        <dbReference type="Rhea" id="RHEA:20401"/>
        <dbReference type="ChEBI" id="CHEBI:15377"/>
        <dbReference type="ChEBI" id="CHEBI:35627"/>
        <dbReference type="ChEBI" id="CHEBI:140347"/>
        <dbReference type="EC" id="3.5.2.6"/>
    </reaction>
</comment>
<comment type="activity regulation">
    <text evidence="7 8 9">Inhibited by various nucleotides in vitro, including adenosine 5'-(P-acetyl)monophosphate (acAMP), inosine-5'-monophosphate (IMP) and guanosine-5'-monophosphate (GMP); IMP and GMP exhibit strongest competitive inhibition (PubMed:27999057, PubMed:28242658). Inhibited by the beta-lactamase-blocking agent, avibactam (PubMed:27999057). Inhibited by clavulanic acid (PubMed:27999057). Weakly inhibited by citric acid (PubMed:27487828).</text>
</comment>
<comment type="biophysicochemical properties">
    <kinetics>
        <KM evidence="6">20.5 uM for benzylpenicillin (at 30 degrees Celsius and pH 7.0)</KM>
        <KM evidence="6">33.9 uM for ceftazidime (at 30 degrees Celsius and pH 7.0)</KM>
        <KM evidence="6">11.4 uM for imipenem (at 30 degrees Celsius and pH 7.0)</KM>
        <text evidence="6">kcat is 3.06 sec(-1) with benzylpenicillin as substrate (at 30 degrees Celsius and pH 7.0) (PubMed:16677302). kcat is 5.0 sec(-1) with ceftazidime as substrate (at 30 degrees Celsius and pH 7.0) (PubMed:16677302). kcat is 1.6 sec(-1) with imipenem as substrate (at 30 degrees Celsius and pH 7.0) (PubMed:16677302).</text>
    </kinetics>
</comment>
<comment type="subunit">
    <text evidence="1">Monomer.</text>
</comment>
<comment type="miscellaneous">
    <text evidence="13">The class C beta-lactamase family has a specific amino-acid numbering system known as SANC, for structural alignment-based numbering of class C beta-lactamases, or else the simpler name structural position. A multiple sequence alignment was used to derive a consensus sequence and then the consensus was numbered taking into account insertions and deletions. This allows use of identical numbers, e.g. for active site residues, despite differences in protein length. UniProt always uses natural numbering of residues, hence there appear to be differences in numbering between this entry and some papers.</text>
</comment>
<comment type="similarity">
    <text evidence="4 12">Belongs to the class-C beta-lactamase family.</text>
</comment>
<dbReference type="EC" id="3.5.2.6" evidence="4 6 9"/>
<dbReference type="EMBL" id="AF357598">
    <property type="protein sequence ID" value="AAK31369.1"/>
    <property type="molecule type" value="Genomic_DNA"/>
</dbReference>
<dbReference type="EMBL" id="AF357597">
    <property type="protein sequence ID" value="AAK31368.1"/>
    <property type="molecule type" value="Genomic_DNA"/>
</dbReference>
<dbReference type="EMBL" id="FJ004895">
    <property type="protein sequence ID" value="ACO24915.1"/>
    <property type="molecule type" value="Genomic_DNA"/>
</dbReference>
<dbReference type="PDB" id="1ZKJ">
    <property type="method" value="X-ray"/>
    <property type="resolution" value="1.55 A"/>
    <property type="chains" value="A=24-382"/>
</dbReference>
<dbReference type="PDB" id="5F1F">
    <property type="method" value="X-ray"/>
    <property type="resolution" value="1.55 A"/>
    <property type="chains" value="A=24-382"/>
</dbReference>
<dbReference type="PDB" id="5GSC">
    <property type="method" value="X-ray"/>
    <property type="resolution" value="1.95 A"/>
    <property type="chains" value="A/B=24-382"/>
</dbReference>
<dbReference type="PDB" id="5K1D">
    <property type="method" value="X-ray"/>
    <property type="resolution" value="1.94 A"/>
    <property type="chains" value="A=24-382"/>
</dbReference>
<dbReference type="PDB" id="5K1F">
    <property type="method" value="X-ray"/>
    <property type="resolution" value="1.94 A"/>
    <property type="chains" value="A=24-382"/>
</dbReference>
<dbReference type="PDBsum" id="1ZKJ"/>
<dbReference type="PDBsum" id="5F1F"/>
<dbReference type="PDBsum" id="5GSC"/>
<dbReference type="PDBsum" id="5K1D"/>
<dbReference type="PDBsum" id="5K1F"/>
<dbReference type="SMR" id="Q99QC1"/>
<dbReference type="CARD" id="ARO:3002021">
    <property type="molecule name" value="CMY-10"/>
    <property type="mechanism identifier" value="ARO:0001004"/>
    <property type="mechanism name" value="antibiotic inactivation"/>
</dbReference>
<dbReference type="MEROPS" id="S12.006"/>
<dbReference type="KEGG" id="ag:AAK31369"/>
<dbReference type="GO" id="GO:0030288">
    <property type="term" value="C:outer membrane-bounded periplasmic space"/>
    <property type="evidence" value="ECO:0007669"/>
    <property type="project" value="InterPro"/>
</dbReference>
<dbReference type="GO" id="GO:0008800">
    <property type="term" value="F:beta-lactamase activity"/>
    <property type="evidence" value="ECO:0007669"/>
    <property type="project" value="UniProtKB-EC"/>
</dbReference>
<dbReference type="GO" id="GO:0046872">
    <property type="term" value="F:metal ion binding"/>
    <property type="evidence" value="ECO:0007669"/>
    <property type="project" value="UniProtKB-KW"/>
</dbReference>
<dbReference type="GO" id="GO:0000166">
    <property type="term" value="F:nucleotide binding"/>
    <property type="evidence" value="ECO:0007669"/>
    <property type="project" value="UniProtKB-KW"/>
</dbReference>
<dbReference type="GO" id="GO:0017001">
    <property type="term" value="P:antibiotic catabolic process"/>
    <property type="evidence" value="ECO:0007669"/>
    <property type="project" value="InterPro"/>
</dbReference>
<dbReference type="GO" id="GO:0046677">
    <property type="term" value="P:response to antibiotic"/>
    <property type="evidence" value="ECO:0007669"/>
    <property type="project" value="UniProtKB-KW"/>
</dbReference>
<dbReference type="Gene3D" id="3.40.710.10">
    <property type="entry name" value="DD-peptidase/beta-lactamase superfamily"/>
    <property type="match status" value="1"/>
</dbReference>
<dbReference type="InterPro" id="IPR050491">
    <property type="entry name" value="Bact_CellWall_Synth/Modif"/>
</dbReference>
<dbReference type="InterPro" id="IPR001466">
    <property type="entry name" value="Beta-lactam-related"/>
</dbReference>
<dbReference type="InterPro" id="IPR012338">
    <property type="entry name" value="Beta-lactam/transpept-like"/>
</dbReference>
<dbReference type="InterPro" id="IPR001586">
    <property type="entry name" value="Beta-lactam_class-C_AS"/>
</dbReference>
<dbReference type="NCBIfam" id="NF033085">
    <property type="entry name" value="bla_class_C"/>
    <property type="match status" value="1"/>
</dbReference>
<dbReference type="NCBIfam" id="NF012172">
    <property type="entry name" value="FOX-MOX"/>
    <property type="match status" value="1"/>
</dbReference>
<dbReference type="NCBIfam" id="NF000239">
    <property type="entry name" value="MOX_CMY1_fam"/>
    <property type="match status" value="1"/>
</dbReference>
<dbReference type="PANTHER" id="PTHR46825:SF8">
    <property type="entry name" value="BETA-LACTAMASE-RELATED"/>
    <property type="match status" value="1"/>
</dbReference>
<dbReference type="PANTHER" id="PTHR46825">
    <property type="entry name" value="D-ALANYL-D-ALANINE-CARBOXYPEPTIDASE/ENDOPEPTIDASE AMPH"/>
    <property type="match status" value="1"/>
</dbReference>
<dbReference type="Pfam" id="PF00144">
    <property type="entry name" value="Beta-lactamase"/>
    <property type="match status" value="1"/>
</dbReference>
<dbReference type="SUPFAM" id="SSF56601">
    <property type="entry name" value="beta-lactamase/transpeptidase-like"/>
    <property type="match status" value="1"/>
</dbReference>
<dbReference type="PROSITE" id="PS00336">
    <property type="entry name" value="BETA_LACTAMASE_C"/>
    <property type="match status" value="1"/>
</dbReference>
<proteinExistence type="evidence at protein level"/>
<evidence type="ECO:0000250" key="1">
    <source>
        <dbReference type="UniProtKB" id="P00811"/>
    </source>
</evidence>
<evidence type="ECO:0000255" key="2"/>
<evidence type="ECO:0000255" key="3">
    <source>
        <dbReference type="PROSITE-ProRule" id="PRU10102"/>
    </source>
</evidence>
<evidence type="ECO:0000255" key="4">
    <source>
        <dbReference type="RuleBase" id="RU361140"/>
    </source>
</evidence>
<evidence type="ECO:0000269" key="5">
    <source>
    </source>
</evidence>
<evidence type="ECO:0000269" key="6">
    <source>
    </source>
</evidence>
<evidence type="ECO:0000269" key="7">
    <source>
    </source>
</evidence>
<evidence type="ECO:0000269" key="8">
    <source>
    </source>
</evidence>
<evidence type="ECO:0000269" key="9">
    <source>
    </source>
</evidence>
<evidence type="ECO:0000303" key="10">
    <source>
    </source>
</evidence>
<evidence type="ECO:0000303" key="11">
    <source>
    </source>
</evidence>
<evidence type="ECO:0000305" key="12"/>
<evidence type="ECO:0000305" key="13">
    <source>
    </source>
</evidence>
<evidence type="ECO:0000312" key="14">
    <source>
        <dbReference type="EMBL" id="AAK31368.1"/>
    </source>
</evidence>
<evidence type="ECO:0000312" key="15">
    <source>
        <dbReference type="EMBL" id="AAK31369.1"/>
    </source>
</evidence>
<evidence type="ECO:0000312" key="16">
    <source>
        <dbReference type="EMBL" id="ACO24915.1"/>
    </source>
</evidence>
<evidence type="ECO:0007744" key="17">
    <source>
        <dbReference type="PDB" id="1ZKJ"/>
    </source>
</evidence>
<evidence type="ECO:0007744" key="18">
    <source>
        <dbReference type="PDB" id="5F1F"/>
    </source>
</evidence>
<evidence type="ECO:0007744" key="19">
    <source>
        <dbReference type="PDB" id="5GSC"/>
    </source>
</evidence>
<evidence type="ECO:0007744" key="20">
    <source>
        <dbReference type="PDB" id="5K1D"/>
    </source>
</evidence>
<evidence type="ECO:0007744" key="21">
    <source>
        <dbReference type="PDB" id="5K1F"/>
    </source>
</evidence>
<evidence type="ECO:0007829" key="22">
    <source>
        <dbReference type="PDB" id="5F1F"/>
    </source>
</evidence>
<sequence>MQQRQSILWGAVATLMWAGLAHAGEASPVDPLRPVVDASIQPLLKEHRIPGMAVAVLKDGKAHYFNYGVANRESGAGVSEQTLFEIGSVSKTLTATLGAYAVVKGAMQLDDKASRHAPWLKGSAFDSITMGELATYSAGGLPLQFPEEVDSSEKMRAYYRQWAPVYSPGSHRQYSNPSIGLFGHLAASSLKQPFAPLMEQTLLPGLGMHHTYVNVPKQAMASYAYGYSKEDKPIRVNPGMLADEAYGIKTSSADLLRFVKANIGGVDDKALQQAISLTHQGHYSVGGMTQGLGWESYAYPVTEQTLLAGNSAKVILEANPTAAPRESGSQVLFNKTGSTNGFGAYVAFVPARGIGIVMLANRNYPIEARIKAAHAILAQLAG</sequence>
<geneLocation type="plasmid" evidence="15">
    <name>pYMG-1</name>
</geneLocation>
<geneLocation type="plasmid" evidence="16">
    <name>pYMG-5</name>
</geneLocation>
<accession>Q99QC1</accession>
<organism evidence="14">
    <name type="scientific">Klebsiella aerogenes</name>
    <name type="common">Enterobacter aerogenes</name>
    <dbReference type="NCBI Taxonomy" id="548"/>
    <lineage>
        <taxon>Bacteria</taxon>
        <taxon>Pseudomonadati</taxon>
        <taxon>Pseudomonadota</taxon>
        <taxon>Gammaproteobacteria</taxon>
        <taxon>Enterobacterales</taxon>
        <taxon>Enterobacteriaceae</taxon>
        <taxon>Klebsiella/Raoultella group</taxon>
        <taxon>Klebsiella</taxon>
    </lineage>
</organism>
<name>BLC10_KLEAE</name>
<keyword id="KW-0002">3D-structure</keyword>
<keyword id="KW-0046">Antibiotic resistance</keyword>
<keyword id="KW-0378">Hydrolase</keyword>
<keyword id="KW-0479">Metal-binding</keyword>
<keyword id="KW-0547">Nucleotide-binding</keyword>
<keyword id="KW-0614">Plasmid</keyword>
<keyword id="KW-0732">Signal</keyword>
<keyword id="KW-0862">Zinc</keyword>
<reference evidence="15" key="1">
    <citation type="journal article" date="2003" name="J. Appl. Microbiol.">
        <title>Characterization of blaCMY-10 a novel, plasmid-encoded AmpC-type beta-lactamase gene in a clinical isolate of Enterobacter aerogenes.</title>
        <authorList>
            <person name="Lee S.H."/>
            <person name="Jeong S.H."/>
            <person name="Park Y.M."/>
        </authorList>
    </citation>
    <scope>NUCLEOTIDE SEQUENCE [GENOMIC DNA]</scope>
    <source>
        <strain evidence="15">K9911729</strain>
        <plasmid evidence="15">pYMG-1</plasmid>
    </source>
</reference>
<reference evidence="14" key="2">
    <citation type="journal article" date="2004" name="Microb. Drug Resist.">
        <title>Dissemination of transferable AmpC-type beta-lactamase (CMY-10) in a Korean hospital.</title>
        <authorList>
            <person name="Lee J.H."/>
            <person name="Jung H.I."/>
            <person name="Jung J.H."/>
            <person name="Park J.S."/>
            <person name="Ahn J.B."/>
            <person name="Jeong S.H."/>
            <person name="Jeong B.C."/>
            <person name="Lee J.H."/>
            <person name="Lee S.H."/>
        </authorList>
    </citation>
    <scope>NUCLEOTIDE SEQUENCE [GENOMIC DNA]</scope>
    <scope>FUNCTION</scope>
    <source>
        <strain evidence="15">K9911729</strain>
        <strain evidence="14">K995747.1</strain>
    </source>
</reference>
<reference evidence="16" key="3">
    <citation type="journal article" date="2009" name="J. Microbiol.">
        <title>Nomenclature of ISCRl elements capable of mobilizing antibiotic resistance genes present in complex class 1 integrons.</title>
        <authorList>
            <person name="Sohn S.G."/>
            <person name="Lee J.J."/>
            <person name="Song J.S."/>
            <person name="Lee J.H."/>
            <person name="Sun H.I."/>
            <person name="Park K.S."/>
            <person name="Bae I.K."/>
            <person name="Lee J.H."/>
            <person name="Jeong B.C."/>
            <person name="Lee S.H."/>
        </authorList>
    </citation>
    <scope>NUCLEOTIDE SEQUENCE [GENOMIC DNA]</scope>
    <source>
        <strain evidence="16">K995747.1</strain>
        <plasmid evidence="16">pYMG-5</plasmid>
    </source>
</reference>
<reference evidence="12" key="4">
    <citation type="journal article" date="2016" name="Acta Crystallogr. D Struct. Biol.">
        <title>Structural basis for the extended substrate spectrum of AmpC BER and structure-guided discovery of the inhibition activity of citrate against the class C beta-lactamases AmpC BER and CMY-10.</title>
        <authorList>
            <person name="Na J.H."/>
            <person name="Cha S.S."/>
        </authorList>
    </citation>
    <scope>ACTIVITY REGULATION</scope>
</reference>
<reference evidence="12" key="5">
    <citation type="journal article" date="2020" name="Antimicrob. Agents Chemother.">
        <title>A Standard Numbering Scheme for Class C beta-Lactamases.</title>
        <authorList>
            <person name="Mack A.R."/>
            <person name="Barnes M.D."/>
            <person name="Taracila M.A."/>
            <person name="Hujer A.M."/>
            <person name="Hujer K.M."/>
            <person name="Cabot G."/>
            <person name="Feldgarden M."/>
            <person name="Haft D.H."/>
            <person name="Klimke W."/>
            <person name="van den Akker F."/>
            <person name="Vila A.J."/>
            <person name="Smania A."/>
            <person name="Haider S."/>
            <person name="Papp-Wallace K.M."/>
            <person name="Bradford P.A."/>
            <person name="Rossolini G.M."/>
            <person name="Docquier J.D."/>
            <person name="Frere J.M."/>
            <person name="Galleni M."/>
            <person name="Hanson N.D."/>
            <person name="Oliver A."/>
            <person name="Plesiat P."/>
            <person name="Poirel L."/>
            <person name="Nordmann P."/>
            <person name="Palzkill T.G."/>
            <person name="Jacoby G.A."/>
            <person name="Bush K."/>
            <person name="Bonomo R.A."/>
        </authorList>
    </citation>
    <scope>AMINO ACID NUMBERING SCHEME</scope>
</reference>
<reference evidence="17" key="6">
    <citation type="journal article" date="2006" name="Mol. Microbiol.">
        <title>Structural basis for the extended substrate spectrum of CMY-10, a plasmid-encoded class C beta-lactamase.</title>
        <authorList>
            <person name="Kim J.Y."/>
            <person name="Jung H.I."/>
            <person name="An Y.J."/>
            <person name="Lee J.H."/>
            <person name="Kim S.J."/>
            <person name="Jeong S.H."/>
            <person name="Lee K.J."/>
            <person name="Suh P.G."/>
            <person name="Lee H.S."/>
            <person name="Lee S.H."/>
            <person name="Cha S.S."/>
        </authorList>
    </citation>
    <scope>X-RAY CRYSTALLOGRAPHY (1.55 ANGSTROMS) OF 24-382</scope>
    <scope>FUNCTION</scope>
    <scope>CATALYTIC ACTIVITY</scope>
    <scope>BIOPHYSICOCHEMICAL PROPERTIES</scope>
</reference>
<reference evidence="19" key="7">
    <citation type="submission" date="2016-08" db="PDB data bank">
        <title>Crystal structure of a class C beta lactamase of Apo form.</title>
        <authorList>
            <person name="Kim M.K."/>
            <person name="An Y.J."/>
            <person name="Na J.H."/>
            <person name="Cha S.S."/>
        </authorList>
    </citation>
    <scope>X-RAY CRYSTALLOGRAPHY (1.95 ANGSTROMS) OF 24-382</scope>
</reference>
<reference evidence="20 21" key="8">
    <citation type="journal article" date="2017" name="Antimicrob. Agents Chemother.">
        <title>GMP and IMP Are Competitive Inhibitors of CMY-10, an Extended-Spectrum Class C beta-Lactamase.</title>
        <authorList>
            <person name="Na J.H."/>
            <person name="An Y.J."/>
            <person name="Cha S.S."/>
        </authorList>
    </citation>
    <scope>X-RAY CRYSTALLOGRAPHY (1.94 ANGSTROMS) OF 24-382 IN COMPLEXES WITH GMP AND IMP</scope>
    <scope>FUNCTION</scope>
    <scope>CATALYTIC ACTIVITY</scope>
    <scope>ACTIVITY REGULATION</scope>
</reference>
<reference evidence="18" key="9">
    <citation type="journal article" date="2017" name="J. Antimicrob. Chemother.">
        <title>Structural and mechanistic insights into the inhibition of class C beta-lactamases through the adenylylation of the nucleophilic serine.</title>
        <authorList>
            <person name="Kim M.K."/>
            <person name="An Y.J."/>
            <person name="Na J.H."/>
            <person name="Seol J.H."/>
            <person name="Ryu J.Y."/>
            <person name="Lee J.W."/>
            <person name="Kang L.W."/>
            <person name="Chung K.M."/>
            <person name="Lee J.H."/>
            <person name="Moon J.H."/>
            <person name="Lee J.S."/>
            <person name="Cha S.S."/>
        </authorList>
    </citation>
    <scope>X-RAY CRYSTALLOGRAPHY (1.55 ANGSTROMS) OF 24-382 IN COMPLEX WITH AMP</scope>
    <scope>ACTIVITY REGULATION</scope>
</reference>
<gene>
    <name evidence="10 14" type="primary">blaCMY-10</name>
</gene>
<protein>
    <recommendedName>
        <fullName evidence="4 10 11">Beta-lactamase CMY-10</fullName>
        <ecNumber evidence="4 6 9">3.5.2.6</ecNumber>
    </recommendedName>
</protein>